<accession>P0DD58</accession>
<accession>Q8K8Y4</accession>
<organism>
    <name type="scientific">Streptococcus pyogenes serotype M3 (strain ATCC BAA-595 / MGAS315)</name>
    <dbReference type="NCBI Taxonomy" id="198466"/>
    <lineage>
        <taxon>Bacteria</taxon>
        <taxon>Bacillati</taxon>
        <taxon>Bacillota</taxon>
        <taxon>Bacilli</taxon>
        <taxon>Lactobacillales</taxon>
        <taxon>Streptococcaceae</taxon>
        <taxon>Streptococcus</taxon>
    </lineage>
</organism>
<keyword id="KW-0067">ATP-binding</keyword>
<keyword id="KW-0436">Ligase</keyword>
<keyword id="KW-0460">Magnesium</keyword>
<keyword id="KW-0464">Manganese</keyword>
<keyword id="KW-0479">Metal-binding</keyword>
<keyword id="KW-0547">Nucleotide-binding</keyword>
<keyword id="KW-0658">Purine biosynthesis</keyword>
<name>PUR2_STRP3</name>
<protein>
    <recommendedName>
        <fullName evidence="2">Phosphoribosylamine--glycine ligase</fullName>
        <ecNumber evidence="2">6.3.4.13</ecNumber>
    </recommendedName>
    <alternativeName>
        <fullName evidence="2">GARS</fullName>
    </alternativeName>
    <alternativeName>
        <fullName evidence="2">Glycinamide ribonucleotide synthetase</fullName>
    </alternativeName>
    <alternativeName>
        <fullName evidence="2">Phosphoribosylglycinamide synthetase</fullName>
    </alternativeName>
</protein>
<evidence type="ECO:0000250" key="1"/>
<evidence type="ECO:0000255" key="2">
    <source>
        <dbReference type="HAMAP-Rule" id="MF_00138"/>
    </source>
</evidence>
<evidence type="ECO:0000305" key="3"/>
<sequence length="421" mass="45519">MKLLVVGSGGREHAIAKKLLASKGVDQVFVAPGNDGMTLDGLDLVNIVVSEHSRLIAFAKENEISWAFIGPDDALAAGIVDDFNTAGLRAFGPTKAAAELEWSKDFAKEIMVKYNVPTAAYGTFSDFEKAKAYIEEQGAPIVVKADGLALGKGVVVAETVEQAVEAAQEMLLDNKFGDSGARVVIEEFLDGEEFSLFAFVNGDKFYIMPTAQDHKRAFDGDKGPNTGGMGAYAPVPHLPQSVVDTAVEMIVRPVLEGMVAEGRPYLGVLYVGLILTADGPKVIEFNSRFGDPETQIILPRLTSDFAQNIDDIMMGIEPYITWQKDGVTLGVVVASEGYPFDYEKGVPLPEKTDGDIITYYAGVKFSENSELLLSNGGRVYMLVTTEDSVKAGQDKIYTQLAQQDPTGLFYRNDIGSKAIRE</sequence>
<reference key="1">
    <citation type="journal article" date="2002" name="Proc. Natl. Acad. Sci. U.S.A.">
        <title>Genome sequence of a serotype M3 strain of group A Streptococcus: phage-encoded toxins, the high-virulence phenotype, and clone emergence.</title>
        <authorList>
            <person name="Beres S.B."/>
            <person name="Sylva G.L."/>
            <person name="Barbian K.D."/>
            <person name="Lei B."/>
            <person name="Hoff J.S."/>
            <person name="Mammarella N.D."/>
            <person name="Liu M.-Y."/>
            <person name="Smoot J.C."/>
            <person name="Porcella S.F."/>
            <person name="Parkins L.D."/>
            <person name="Campbell D.S."/>
            <person name="Smith T.M."/>
            <person name="McCormick J.K."/>
            <person name="Leung D.Y.M."/>
            <person name="Schlievert P.M."/>
            <person name="Musser J.M."/>
        </authorList>
    </citation>
    <scope>NUCLEOTIDE SEQUENCE [LARGE SCALE GENOMIC DNA]</scope>
    <source>
        <strain>ATCC BAA-595 / MGAS315</strain>
    </source>
</reference>
<gene>
    <name evidence="2" type="primary">purD</name>
    <name type="ordered locus">SpyM3_0026</name>
</gene>
<dbReference type="EC" id="6.3.4.13" evidence="2"/>
<dbReference type="EMBL" id="AE014074">
    <property type="protein sequence ID" value="AAM78633.1"/>
    <property type="status" value="ALT_INIT"/>
    <property type="molecule type" value="Genomic_DNA"/>
</dbReference>
<dbReference type="RefSeq" id="WP_032461289.1">
    <property type="nucleotide sequence ID" value="NC_004070.1"/>
</dbReference>
<dbReference type="SMR" id="P0DD58"/>
<dbReference type="KEGG" id="spg:SpyM3_0026"/>
<dbReference type="HOGENOM" id="CLU_027420_3_1_9"/>
<dbReference type="UniPathway" id="UPA00074">
    <property type="reaction ID" value="UER00125"/>
</dbReference>
<dbReference type="Proteomes" id="UP000000564">
    <property type="component" value="Chromosome"/>
</dbReference>
<dbReference type="GO" id="GO:0005524">
    <property type="term" value="F:ATP binding"/>
    <property type="evidence" value="ECO:0007669"/>
    <property type="project" value="UniProtKB-KW"/>
</dbReference>
<dbReference type="GO" id="GO:0046872">
    <property type="term" value="F:metal ion binding"/>
    <property type="evidence" value="ECO:0007669"/>
    <property type="project" value="UniProtKB-KW"/>
</dbReference>
<dbReference type="GO" id="GO:0004637">
    <property type="term" value="F:phosphoribosylamine-glycine ligase activity"/>
    <property type="evidence" value="ECO:0007669"/>
    <property type="project" value="UniProtKB-UniRule"/>
</dbReference>
<dbReference type="GO" id="GO:0006189">
    <property type="term" value="P:'de novo' IMP biosynthetic process"/>
    <property type="evidence" value="ECO:0007669"/>
    <property type="project" value="UniProtKB-UniRule"/>
</dbReference>
<dbReference type="GO" id="GO:0009113">
    <property type="term" value="P:purine nucleobase biosynthetic process"/>
    <property type="evidence" value="ECO:0007669"/>
    <property type="project" value="InterPro"/>
</dbReference>
<dbReference type="FunFam" id="3.30.1490.20:FF:000006">
    <property type="entry name" value="phosphoribosylamine--glycine ligase, chloroplastic-like"/>
    <property type="match status" value="1"/>
</dbReference>
<dbReference type="Gene3D" id="3.40.50.20">
    <property type="match status" value="1"/>
</dbReference>
<dbReference type="Gene3D" id="3.30.1490.20">
    <property type="entry name" value="ATP-grasp fold, A domain"/>
    <property type="match status" value="1"/>
</dbReference>
<dbReference type="Gene3D" id="3.30.470.20">
    <property type="entry name" value="ATP-grasp fold, B domain"/>
    <property type="match status" value="1"/>
</dbReference>
<dbReference type="Gene3D" id="3.90.600.10">
    <property type="entry name" value="Phosphoribosylglycinamide synthetase, C-terminal domain"/>
    <property type="match status" value="1"/>
</dbReference>
<dbReference type="HAMAP" id="MF_00138">
    <property type="entry name" value="GARS"/>
    <property type="match status" value="1"/>
</dbReference>
<dbReference type="InterPro" id="IPR011761">
    <property type="entry name" value="ATP-grasp"/>
</dbReference>
<dbReference type="InterPro" id="IPR013815">
    <property type="entry name" value="ATP_grasp_subdomain_1"/>
</dbReference>
<dbReference type="InterPro" id="IPR016185">
    <property type="entry name" value="PreATP-grasp_dom_sf"/>
</dbReference>
<dbReference type="InterPro" id="IPR020561">
    <property type="entry name" value="PRibGlycinamid_synth_ATP-grasp"/>
</dbReference>
<dbReference type="InterPro" id="IPR000115">
    <property type="entry name" value="PRibGlycinamide_synth"/>
</dbReference>
<dbReference type="InterPro" id="IPR020560">
    <property type="entry name" value="PRibGlycinamide_synth_C-dom"/>
</dbReference>
<dbReference type="InterPro" id="IPR037123">
    <property type="entry name" value="PRibGlycinamide_synth_C_sf"/>
</dbReference>
<dbReference type="InterPro" id="IPR020559">
    <property type="entry name" value="PRibGlycinamide_synth_CS"/>
</dbReference>
<dbReference type="InterPro" id="IPR020562">
    <property type="entry name" value="PRibGlycinamide_synth_N"/>
</dbReference>
<dbReference type="InterPro" id="IPR011054">
    <property type="entry name" value="Rudment_hybrid_motif"/>
</dbReference>
<dbReference type="NCBIfam" id="TIGR00877">
    <property type="entry name" value="purD"/>
    <property type="match status" value="1"/>
</dbReference>
<dbReference type="PANTHER" id="PTHR43472">
    <property type="entry name" value="PHOSPHORIBOSYLAMINE--GLYCINE LIGASE"/>
    <property type="match status" value="1"/>
</dbReference>
<dbReference type="PANTHER" id="PTHR43472:SF1">
    <property type="entry name" value="PHOSPHORIBOSYLAMINE--GLYCINE LIGASE, CHLOROPLASTIC"/>
    <property type="match status" value="1"/>
</dbReference>
<dbReference type="Pfam" id="PF01071">
    <property type="entry name" value="GARS_A"/>
    <property type="match status" value="1"/>
</dbReference>
<dbReference type="Pfam" id="PF02843">
    <property type="entry name" value="GARS_C"/>
    <property type="match status" value="1"/>
</dbReference>
<dbReference type="Pfam" id="PF02844">
    <property type="entry name" value="GARS_N"/>
    <property type="match status" value="1"/>
</dbReference>
<dbReference type="SMART" id="SM01209">
    <property type="entry name" value="GARS_A"/>
    <property type="match status" value="1"/>
</dbReference>
<dbReference type="SMART" id="SM01210">
    <property type="entry name" value="GARS_C"/>
    <property type="match status" value="1"/>
</dbReference>
<dbReference type="SUPFAM" id="SSF56059">
    <property type="entry name" value="Glutathione synthetase ATP-binding domain-like"/>
    <property type="match status" value="1"/>
</dbReference>
<dbReference type="SUPFAM" id="SSF52440">
    <property type="entry name" value="PreATP-grasp domain"/>
    <property type="match status" value="1"/>
</dbReference>
<dbReference type="SUPFAM" id="SSF51246">
    <property type="entry name" value="Rudiment single hybrid motif"/>
    <property type="match status" value="1"/>
</dbReference>
<dbReference type="PROSITE" id="PS50975">
    <property type="entry name" value="ATP_GRASP"/>
    <property type="match status" value="1"/>
</dbReference>
<dbReference type="PROSITE" id="PS00184">
    <property type="entry name" value="GARS"/>
    <property type="match status" value="1"/>
</dbReference>
<proteinExistence type="inferred from homology"/>
<comment type="catalytic activity">
    <reaction evidence="2">
        <text>5-phospho-beta-D-ribosylamine + glycine + ATP = N(1)-(5-phospho-beta-D-ribosyl)glycinamide + ADP + phosphate + H(+)</text>
        <dbReference type="Rhea" id="RHEA:17453"/>
        <dbReference type="ChEBI" id="CHEBI:15378"/>
        <dbReference type="ChEBI" id="CHEBI:30616"/>
        <dbReference type="ChEBI" id="CHEBI:43474"/>
        <dbReference type="ChEBI" id="CHEBI:57305"/>
        <dbReference type="ChEBI" id="CHEBI:58681"/>
        <dbReference type="ChEBI" id="CHEBI:143788"/>
        <dbReference type="ChEBI" id="CHEBI:456216"/>
        <dbReference type="EC" id="6.3.4.13"/>
    </reaction>
</comment>
<comment type="cofactor">
    <cofactor evidence="1">
        <name>Mg(2+)</name>
        <dbReference type="ChEBI" id="CHEBI:18420"/>
    </cofactor>
    <cofactor evidence="1">
        <name>Mn(2+)</name>
        <dbReference type="ChEBI" id="CHEBI:29035"/>
    </cofactor>
    <text evidence="1">Binds 1 Mg(2+) or Mn(2+) ion per subunit.</text>
</comment>
<comment type="pathway">
    <text evidence="2">Purine metabolism; IMP biosynthesis via de novo pathway; N(1)-(5-phospho-D-ribosyl)glycinamide from 5-phospho-alpha-D-ribose 1-diphosphate: step 2/2.</text>
</comment>
<comment type="similarity">
    <text evidence="2">Belongs to the GARS family.</text>
</comment>
<comment type="sequence caution" evidence="3">
    <conflict type="erroneous initiation">
        <sequence resource="EMBL-CDS" id="AAM78633"/>
    </conflict>
</comment>
<feature type="chain" id="PRO_0000151490" description="Phosphoribosylamine--glycine ligase">
    <location>
        <begin position="1"/>
        <end position="421"/>
    </location>
</feature>
<feature type="domain" description="ATP-grasp" evidence="2">
    <location>
        <begin position="108"/>
        <end position="314"/>
    </location>
</feature>
<feature type="binding site" evidence="2">
    <location>
        <begin position="134"/>
        <end position="195"/>
    </location>
    <ligand>
        <name>ATP</name>
        <dbReference type="ChEBI" id="CHEBI:30616"/>
    </ligand>
</feature>
<feature type="binding site" evidence="2">
    <location>
        <position position="284"/>
    </location>
    <ligand>
        <name>Mg(2+)</name>
        <dbReference type="ChEBI" id="CHEBI:18420"/>
    </ligand>
</feature>
<feature type="binding site" evidence="2">
    <location>
        <position position="286"/>
    </location>
    <ligand>
        <name>Mg(2+)</name>
        <dbReference type="ChEBI" id="CHEBI:18420"/>
    </ligand>
</feature>